<protein>
    <recommendedName>
        <fullName evidence="1">Bifunctional F420 biosynthesis protein FbiB</fullName>
    </recommendedName>
    <domain>
        <recommendedName>
            <fullName evidence="1">Coenzyme F420:L-glutamate ligase</fullName>
            <ecNumber evidence="1 2">6.3.2.31</ecNumber>
            <ecNumber evidence="1 2">6.3.2.34</ecNumber>
        </recommendedName>
        <alternativeName>
            <fullName evidence="1">Coenzyme F420-0:L-glutamate ligase</fullName>
        </alternativeName>
        <alternativeName>
            <fullName evidence="1">Coenzyme F420-1:gamma-L-glutamate ligase</fullName>
        </alternativeName>
    </domain>
    <domain>
        <recommendedName>
            <fullName evidence="4">Dehydro-coenzyme F420-0 reductase</fullName>
            <ecNumber evidence="3">1.3.8.17</ecNumber>
        </recommendedName>
    </domain>
</protein>
<comment type="function">
    <text evidence="1 2 3">Bifunctional enzyme that catalyzes the GTP-dependent successive addition of multiple gamma-linked L-glutamates to the L-lactyl phosphodiester of 7,8-didemethyl-8-hydroxy-5-deazariboflavin (F420-0) to form polyglutamated F420 derivatives, and the FMNH2-dependent reduction of dehydro-F420-0 to form F420-0.</text>
</comment>
<comment type="catalytic activity">
    <reaction evidence="1 2">
        <text>oxidized coenzyme F420-0 + GTP + L-glutamate = oxidized coenzyme F420-1 + GDP + phosphate + H(+)</text>
        <dbReference type="Rhea" id="RHEA:30555"/>
        <dbReference type="ChEBI" id="CHEBI:15378"/>
        <dbReference type="ChEBI" id="CHEBI:29985"/>
        <dbReference type="ChEBI" id="CHEBI:37565"/>
        <dbReference type="ChEBI" id="CHEBI:43474"/>
        <dbReference type="ChEBI" id="CHEBI:58189"/>
        <dbReference type="ChEBI" id="CHEBI:59907"/>
        <dbReference type="ChEBI" id="CHEBI:59920"/>
        <dbReference type="EC" id="6.3.2.31"/>
    </reaction>
</comment>
<comment type="catalytic activity">
    <reaction evidence="1 2">
        <text>oxidized coenzyme F420-1 + GTP + L-glutamate = oxidized coenzyme F420-2 + GDP + phosphate + H(+)</text>
        <dbReference type="Rhea" id="RHEA:30523"/>
        <dbReference type="ChEBI" id="CHEBI:15378"/>
        <dbReference type="ChEBI" id="CHEBI:29985"/>
        <dbReference type="ChEBI" id="CHEBI:37565"/>
        <dbReference type="ChEBI" id="CHEBI:43474"/>
        <dbReference type="ChEBI" id="CHEBI:57922"/>
        <dbReference type="ChEBI" id="CHEBI:58189"/>
        <dbReference type="ChEBI" id="CHEBI:59920"/>
        <dbReference type="EC" id="6.3.2.34"/>
    </reaction>
</comment>
<comment type="catalytic activity">
    <reaction evidence="1 2">
        <text>oxidized coenzyme F420-(gamma-L-Glu)(n) + GTP + L-glutamate = oxidized coenzyme F420-(gamma-L-Glu)(n+1) + GDP + phosphate + H(+)</text>
        <dbReference type="Rhea" id="RHEA:51236"/>
        <dbReference type="Rhea" id="RHEA-COMP:12939"/>
        <dbReference type="Rhea" id="RHEA-COMP:12940"/>
        <dbReference type="ChEBI" id="CHEBI:15378"/>
        <dbReference type="ChEBI" id="CHEBI:29985"/>
        <dbReference type="ChEBI" id="CHEBI:37565"/>
        <dbReference type="ChEBI" id="CHEBI:43474"/>
        <dbReference type="ChEBI" id="CHEBI:58189"/>
        <dbReference type="ChEBI" id="CHEBI:133980"/>
    </reaction>
</comment>
<comment type="catalytic activity">
    <reaction evidence="3">
        <text>oxidized coenzyme F420-0 + FMN + H(+) = dehydro coenzyme F420-0 + FMNH2</text>
        <dbReference type="Rhea" id="RHEA:60360"/>
        <dbReference type="ChEBI" id="CHEBI:15378"/>
        <dbReference type="ChEBI" id="CHEBI:57618"/>
        <dbReference type="ChEBI" id="CHEBI:58210"/>
        <dbReference type="ChEBI" id="CHEBI:59907"/>
        <dbReference type="ChEBI" id="CHEBI:143705"/>
        <dbReference type="EC" id="1.3.8.17"/>
    </reaction>
</comment>
<comment type="cofactor">
    <cofactor evidence="1">
        <name>Mg(2+)</name>
        <dbReference type="ChEBI" id="CHEBI:18420"/>
    </cofactor>
    <cofactor evidence="1">
        <name>Mn(2+)</name>
        <dbReference type="ChEBI" id="CHEBI:29035"/>
    </cofactor>
    <text evidence="1">Binds 2 divalent metal cations per subunit. The ions could be magnesium and/or manganese.</text>
</comment>
<comment type="cofactor">
    <cofactor evidence="1">
        <name>K(+)</name>
        <dbReference type="ChEBI" id="CHEBI:29103"/>
    </cofactor>
    <text evidence="1">Monovalent cation. The ion could be potassium.</text>
</comment>
<comment type="biophysicochemical properties">
    <phDependence>
        <text evidence="2">Optimum pH is 8.5.</text>
    </phDependence>
</comment>
<comment type="pathway">
    <text evidence="1">Cofactor biosynthesis; coenzyme F420 biosynthesis.</text>
</comment>
<comment type="similarity">
    <text evidence="1">In the N-terminal section; belongs to the CofE family.</text>
</comment>
<name>FBIB_MYCTU</name>
<keyword id="KW-0002">3D-structure</keyword>
<keyword id="KW-0342">GTP-binding</keyword>
<keyword id="KW-0436">Ligase</keyword>
<keyword id="KW-0460">Magnesium</keyword>
<keyword id="KW-0464">Manganese</keyword>
<keyword id="KW-0479">Metal-binding</keyword>
<keyword id="KW-0511">Multifunctional enzyme</keyword>
<keyword id="KW-0547">Nucleotide-binding</keyword>
<keyword id="KW-0560">Oxidoreductase</keyword>
<keyword id="KW-0630">Potassium</keyword>
<keyword id="KW-1185">Reference proteome</keyword>
<accession>P9WP79</accession>
<accession>L0TDM4</accession>
<accession>P96867</accession>
<accession>Q7D5T5</accession>
<gene>
    <name evidence="1" type="primary">fbiB</name>
    <name type="ordered locus">Rv3262</name>
</gene>
<organism>
    <name type="scientific">Mycobacterium tuberculosis (strain ATCC 25618 / H37Rv)</name>
    <dbReference type="NCBI Taxonomy" id="83332"/>
    <lineage>
        <taxon>Bacteria</taxon>
        <taxon>Bacillati</taxon>
        <taxon>Actinomycetota</taxon>
        <taxon>Actinomycetes</taxon>
        <taxon>Mycobacteriales</taxon>
        <taxon>Mycobacteriaceae</taxon>
        <taxon>Mycobacterium</taxon>
        <taxon>Mycobacterium tuberculosis complex</taxon>
    </lineage>
</organism>
<reference key="1">
    <citation type="journal article" date="1998" name="Nature">
        <title>Deciphering the biology of Mycobacterium tuberculosis from the complete genome sequence.</title>
        <authorList>
            <person name="Cole S.T."/>
            <person name="Brosch R."/>
            <person name="Parkhill J."/>
            <person name="Garnier T."/>
            <person name="Churcher C.M."/>
            <person name="Harris D.E."/>
            <person name="Gordon S.V."/>
            <person name="Eiglmeier K."/>
            <person name="Gas S."/>
            <person name="Barry C.E. III"/>
            <person name="Tekaia F."/>
            <person name="Badcock K."/>
            <person name="Basham D."/>
            <person name="Brown D."/>
            <person name="Chillingworth T."/>
            <person name="Connor R."/>
            <person name="Davies R.M."/>
            <person name="Devlin K."/>
            <person name="Feltwell T."/>
            <person name="Gentles S."/>
            <person name="Hamlin N."/>
            <person name="Holroyd S."/>
            <person name="Hornsby T."/>
            <person name="Jagels K."/>
            <person name="Krogh A."/>
            <person name="McLean J."/>
            <person name="Moule S."/>
            <person name="Murphy L.D."/>
            <person name="Oliver S."/>
            <person name="Osborne J."/>
            <person name="Quail M.A."/>
            <person name="Rajandream M.A."/>
            <person name="Rogers J."/>
            <person name="Rutter S."/>
            <person name="Seeger K."/>
            <person name="Skelton S."/>
            <person name="Squares S."/>
            <person name="Squares R."/>
            <person name="Sulston J.E."/>
            <person name="Taylor K."/>
            <person name="Whitehead S."/>
            <person name="Barrell B.G."/>
        </authorList>
    </citation>
    <scope>NUCLEOTIDE SEQUENCE [LARGE SCALE GENOMIC DNA]</scope>
    <source>
        <strain>ATCC 25618 / H37Rv</strain>
    </source>
</reference>
<reference key="2">
    <citation type="journal article" date="2011" name="Acta Crystallogr. F">
        <title>Cloning, expression, purification, crystallization and preliminary X-ray studies of the C-terminal domain of Rv3262 (FbiB) from Mycobacterium tuberculosis.</title>
        <authorList>
            <person name="Rehan A.M."/>
            <person name="Bashiri G."/>
            <person name="Paterson N.G."/>
            <person name="Baker E.N."/>
            <person name="Squire C.J."/>
        </authorList>
    </citation>
    <scope>CRYSTALLIZATION OF 245-448</scope>
    <source>
        <strain>ATCC 25618 / H37Rv</strain>
    </source>
</reference>
<reference key="3">
    <citation type="journal article" date="2011" name="Mol. Cell. Proteomics">
        <title>Proteogenomic analysis of Mycobacterium tuberculosis by high resolution mass spectrometry.</title>
        <authorList>
            <person name="Kelkar D.S."/>
            <person name="Kumar D."/>
            <person name="Kumar P."/>
            <person name="Balakrishnan L."/>
            <person name="Muthusamy B."/>
            <person name="Yadav A.K."/>
            <person name="Shrivastava P."/>
            <person name="Marimuthu A."/>
            <person name="Anand S."/>
            <person name="Sundaram H."/>
            <person name="Kingsbury R."/>
            <person name="Harsha H.C."/>
            <person name="Nair B."/>
            <person name="Prasad T.S."/>
            <person name="Chauhan D.S."/>
            <person name="Katoch K."/>
            <person name="Katoch V.M."/>
            <person name="Kumar P."/>
            <person name="Chaerkady R."/>
            <person name="Ramachandran S."/>
            <person name="Dash D."/>
            <person name="Pandey A."/>
        </authorList>
    </citation>
    <scope>IDENTIFICATION BY MASS SPECTROMETRY [LARGE SCALE ANALYSIS]</scope>
    <source>
        <strain>ATCC 25618 / H37Rv</strain>
    </source>
</reference>
<reference key="4">
    <citation type="journal article" date="2019" name="Nat. Commun.">
        <title>A revised biosynthetic pathway for the cofactor F420 in prokaryotes.</title>
        <authorList>
            <person name="Bashiri G."/>
            <person name="Antoney J."/>
            <person name="Jirgis E.N.M."/>
            <person name="Shah M.V."/>
            <person name="Ney B."/>
            <person name="Copp J."/>
            <person name="Stuteley S.M."/>
            <person name="Sreebhavan S."/>
            <person name="Palmer B."/>
            <person name="Middleditch M."/>
            <person name="Tokuriki N."/>
            <person name="Greening C."/>
            <person name="Scott C."/>
            <person name="Baker E.N."/>
            <person name="Jackson C.J."/>
        </authorList>
    </citation>
    <scope>FUNCTION OF C-TERMINAL DOMAIN</scope>
    <scope>CATALYTIC ACTIVITY OF C-TERMINAL DOMAIN</scope>
</reference>
<reference key="5">
    <citation type="journal article" date="2016" name="J. Biol. Chem.">
        <title>Elongation of the Poly-gamma-glutamate Tail of F420 Requires Both Domains of the F420:gamma-Glutamyl Ligase (FbiB) of Mycobacterium tuberculosis.</title>
        <authorList>
            <person name="Bashiri G."/>
            <person name="Rehan A.M."/>
            <person name="Sreebhavan S."/>
            <person name="Baker H.M."/>
            <person name="Baker E.N."/>
            <person name="Squire C.J."/>
        </authorList>
    </citation>
    <scope>X-RAY CRYSTALLOGRAPHY (1.90 ANGSTROMS) OF 245-448 OF APOENZYME AND IN COMPLEXES WITH FMN AND COENZYME GAMMA-F420-2</scope>
    <scope>FUNCTION</scope>
    <scope>CATALYTIC ACTIVITY OF N-TERMINAL DOMAIN</scope>
    <scope>BIOPHYSICOCHEMICAL PROPERTIES</scope>
</reference>
<proteinExistence type="evidence at protein level"/>
<evidence type="ECO:0000255" key="1">
    <source>
        <dbReference type="HAMAP-Rule" id="MF_01259"/>
    </source>
</evidence>
<evidence type="ECO:0000269" key="2">
    <source>
    </source>
</evidence>
<evidence type="ECO:0000269" key="3">
    <source>
    </source>
</evidence>
<evidence type="ECO:0000305" key="4">
    <source>
    </source>
</evidence>
<evidence type="ECO:0007744" key="5">
    <source>
        <dbReference type="PDB" id="4XOO"/>
    </source>
</evidence>
<evidence type="ECO:0007744" key="6">
    <source>
        <dbReference type="PDB" id="4XOQ"/>
    </source>
</evidence>
<evidence type="ECO:0007829" key="7">
    <source>
        <dbReference type="PDB" id="4XOM"/>
    </source>
</evidence>
<sequence>MTGPEHGSASTIEILPVIGLPEFRPGDDLSAAVAAAAPWLRDGDVVVVTSKVVSKCEGRLVPAPEDPEQRDRLRRKLIEDEAVRVLARKDRTLITENRLGLVQAAAGVDGSNVGRSELALLPVDPDASAATLRAGLRERLGVTVAVVITDTMGRAWRNGQTDAAVGAAGLAVLRNYAGVRDPYGNELVVTEVAVADEIAAAADLVKGKLTATPVAVVRGFGVSDDGSTARQLLRPGANDLFWLGTAEALELGRQQAQLLRRSVRRFSTDPVPGDLVEAAVAEALTAPAPHHTRPTRFVWLQTPAIRARLLDRMKDKWRSDLTSDGLPADAIERRVARGQILYDAPEVVIPMLVPDGAHSYPDAARTDAEHTMFTVAVGAAVQALLVALAVRGLGSCWIGSTIFAADLVRDELDLPVDWEPLGAIAIGYADEPSGLRDPVPAADLLILK</sequence>
<dbReference type="EC" id="6.3.2.31" evidence="1 2"/>
<dbReference type="EC" id="6.3.2.34" evidence="1 2"/>
<dbReference type="EC" id="1.3.8.17" evidence="3"/>
<dbReference type="EMBL" id="AL123456">
    <property type="protein sequence ID" value="CCP46081.1"/>
    <property type="molecule type" value="Genomic_DNA"/>
</dbReference>
<dbReference type="PIR" id="G70977">
    <property type="entry name" value="G70977"/>
</dbReference>
<dbReference type="RefSeq" id="NP_217779.1">
    <property type="nucleotide sequence ID" value="NC_000962.3"/>
</dbReference>
<dbReference type="RefSeq" id="WP_003900663.1">
    <property type="nucleotide sequence ID" value="NZ_NVQJ01000003.1"/>
</dbReference>
<dbReference type="PDB" id="4XOM">
    <property type="method" value="X-ray"/>
    <property type="resolution" value="1.90 A"/>
    <property type="chains" value="A/B/C/D=245-448"/>
</dbReference>
<dbReference type="PDB" id="4XOO">
    <property type="method" value="X-ray"/>
    <property type="resolution" value="2.10 A"/>
    <property type="chains" value="A/B/C/D=245-448"/>
</dbReference>
<dbReference type="PDB" id="4XOQ">
    <property type="method" value="X-ray"/>
    <property type="resolution" value="2.05 A"/>
    <property type="chains" value="A/B/C/D=245-448"/>
</dbReference>
<dbReference type="PDBsum" id="4XOM"/>
<dbReference type="PDBsum" id="4XOO"/>
<dbReference type="PDBsum" id="4XOQ"/>
<dbReference type="SMR" id="P9WP79"/>
<dbReference type="FunCoup" id="P9WP79">
    <property type="interactions" value="1"/>
</dbReference>
<dbReference type="STRING" id="83332.Rv3262"/>
<dbReference type="PaxDb" id="83332-Rv3262"/>
<dbReference type="DNASU" id="888693"/>
<dbReference type="GeneID" id="888693"/>
<dbReference type="KEGG" id="mtu:Rv3262"/>
<dbReference type="KEGG" id="mtv:RVBD_3262"/>
<dbReference type="TubercuList" id="Rv3262"/>
<dbReference type="eggNOG" id="COG0778">
    <property type="taxonomic scope" value="Bacteria"/>
</dbReference>
<dbReference type="eggNOG" id="COG1478">
    <property type="taxonomic scope" value="Bacteria"/>
</dbReference>
<dbReference type="InParanoid" id="P9WP79"/>
<dbReference type="OrthoDB" id="9788295at2"/>
<dbReference type="PhylomeDB" id="P9WP79"/>
<dbReference type="BioCyc" id="MetaCyc:G185E-7536-MONOMER"/>
<dbReference type="BRENDA" id="1.3.8.17">
    <property type="organism ID" value="3445"/>
</dbReference>
<dbReference type="BRENDA" id="6.3.2.31">
    <property type="organism ID" value="3445"/>
</dbReference>
<dbReference type="BRENDA" id="6.3.2.34">
    <property type="organism ID" value="3445"/>
</dbReference>
<dbReference type="UniPathway" id="UPA00071"/>
<dbReference type="Proteomes" id="UP000001584">
    <property type="component" value="Chromosome"/>
</dbReference>
<dbReference type="GO" id="GO:0005886">
    <property type="term" value="C:plasma membrane"/>
    <property type="evidence" value="ECO:0007005"/>
    <property type="project" value="MTBBASE"/>
</dbReference>
<dbReference type="GO" id="GO:0052618">
    <property type="term" value="F:coenzyme F420-0:L-glutamate ligase activity"/>
    <property type="evidence" value="ECO:0000318"/>
    <property type="project" value="GO_Central"/>
</dbReference>
<dbReference type="GO" id="GO:0052619">
    <property type="term" value="F:coenzyme F420-1:gamma-L-glutamate ligase activity"/>
    <property type="evidence" value="ECO:0007669"/>
    <property type="project" value="UniProtKB-UniRule"/>
</dbReference>
<dbReference type="GO" id="GO:0005525">
    <property type="term" value="F:GTP binding"/>
    <property type="evidence" value="ECO:0007669"/>
    <property type="project" value="UniProtKB-KW"/>
</dbReference>
<dbReference type="GO" id="GO:0046872">
    <property type="term" value="F:metal ion binding"/>
    <property type="evidence" value="ECO:0007669"/>
    <property type="project" value="UniProtKB-KW"/>
</dbReference>
<dbReference type="GO" id="GO:0052890">
    <property type="term" value="F:oxidoreductase activity, acting on the CH-CH group of donors, with a flavin as acceptor"/>
    <property type="evidence" value="ECO:0007669"/>
    <property type="project" value="UniProtKB-UniRule"/>
</dbReference>
<dbReference type="GO" id="GO:2001121">
    <property type="term" value="P:coenzyme gamma-F420-2 biosynthetic process"/>
    <property type="evidence" value="ECO:0000315"/>
    <property type="project" value="MTBBASE"/>
</dbReference>
<dbReference type="GO" id="GO:0052645">
    <property type="term" value="P:F420-0 metabolic process"/>
    <property type="evidence" value="ECO:0007669"/>
    <property type="project" value="UniProtKB-UniRule"/>
</dbReference>
<dbReference type="CDD" id="cd20607">
    <property type="entry name" value="FbiB_C-like"/>
    <property type="match status" value="1"/>
</dbReference>
<dbReference type="FunFam" id="3.40.109.10:FF:000009">
    <property type="entry name" value="Coenzyme F420:L-glutamate ligase"/>
    <property type="match status" value="1"/>
</dbReference>
<dbReference type="Gene3D" id="3.30.1330.100">
    <property type="entry name" value="CofE-like"/>
    <property type="match status" value="1"/>
</dbReference>
<dbReference type="Gene3D" id="3.90.1660.10">
    <property type="entry name" value="CofE-like domain"/>
    <property type="match status" value="1"/>
</dbReference>
<dbReference type="Gene3D" id="3.40.109.10">
    <property type="entry name" value="NADH Oxidase"/>
    <property type="match status" value="1"/>
</dbReference>
<dbReference type="HAMAP" id="MF_01259">
    <property type="entry name" value="F420_ligase_FbiB"/>
    <property type="match status" value="1"/>
</dbReference>
<dbReference type="InterPro" id="IPR008225">
    <property type="entry name" value="F420-0_g-glutamyl_ligase"/>
</dbReference>
<dbReference type="InterPro" id="IPR002847">
    <property type="entry name" value="F420-0_gamma-glut_ligase-dom"/>
</dbReference>
<dbReference type="InterPro" id="IPR019943">
    <property type="entry name" value="F420_FbiB_C"/>
</dbReference>
<dbReference type="InterPro" id="IPR023661">
    <property type="entry name" value="FbiB"/>
</dbReference>
<dbReference type="InterPro" id="IPR029479">
    <property type="entry name" value="Nitroreductase"/>
</dbReference>
<dbReference type="InterPro" id="IPR000415">
    <property type="entry name" value="Nitroreductase-like"/>
</dbReference>
<dbReference type="NCBIfam" id="TIGR01916">
    <property type="entry name" value="F420_cofE"/>
    <property type="match status" value="1"/>
</dbReference>
<dbReference type="NCBIfam" id="TIGR03553">
    <property type="entry name" value="F420_FbiB_CTERM"/>
    <property type="match status" value="1"/>
</dbReference>
<dbReference type="NCBIfam" id="NF009810">
    <property type="entry name" value="PRK13294.1"/>
    <property type="match status" value="1"/>
</dbReference>
<dbReference type="PANTHER" id="PTHR47917">
    <property type="match status" value="1"/>
</dbReference>
<dbReference type="PANTHER" id="PTHR47917:SF1">
    <property type="entry name" value="COENZYME F420:L-GLUTAMATE LIGASE"/>
    <property type="match status" value="1"/>
</dbReference>
<dbReference type="Pfam" id="PF01996">
    <property type="entry name" value="F420_ligase"/>
    <property type="match status" value="1"/>
</dbReference>
<dbReference type="Pfam" id="PF00881">
    <property type="entry name" value="Nitroreductase"/>
    <property type="match status" value="1"/>
</dbReference>
<dbReference type="SUPFAM" id="SSF144010">
    <property type="entry name" value="CofE-like"/>
    <property type="match status" value="1"/>
</dbReference>
<dbReference type="SUPFAM" id="SSF55469">
    <property type="entry name" value="FMN-dependent nitroreductase-like"/>
    <property type="match status" value="1"/>
</dbReference>
<feature type="chain" id="PRO_0000145780" description="Bifunctional F420 biosynthesis protein FbiB">
    <location>
        <begin position="1"/>
        <end position="448"/>
    </location>
</feature>
<feature type="region of interest" description="Coenzyme F420:L-glutamate ligase">
    <location>
        <begin position="1"/>
        <end position="244"/>
    </location>
</feature>
<feature type="region of interest" description="Dehydro-coenzyme F420-0 reductase">
    <location>
        <begin position="245"/>
        <end position="448"/>
    </location>
</feature>
<feature type="binding site" evidence="1">
    <location>
        <begin position="20"/>
        <end position="23"/>
    </location>
    <ligand>
        <name>GTP</name>
        <dbReference type="ChEBI" id="CHEBI:37565"/>
    </ligand>
</feature>
<feature type="binding site" evidence="1">
    <location>
        <position position="50"/>
    </location>
    <ligand>
        <name>GTP</name>
        <dbReference type="ChEBI" id="CHEBI:37565"/>
    </ligand>
</feature>
<feature type="binding site" evidence="1">
    <location>
        <position position="55"/>
    </location>
    <ligand>
        <name>GTP</name>
        <dbReference type="ChEBI" id="CHEBI:37565"/>
    </ligand>
</feature>
<feature type="binding site" evidence="1">
    <location>
        <position position="109"/>
    </location>
    <ligand>
        <name>a divalent metal cation</name>
        <dbReference type="ChEBI" id="CHEBI:60240"/>
        <label>1</label>
    </ligand>
</feature>
<feature type="binding site" evidence="1">
    <location>
        <position position="112"/>
    </location>
    <ligand>
        <name>GTP</name>
        <dbReference type="ChEBI" id="CHEBI:37565"/>
    </ligand>
</feature>
<feature type="binding site" evidence="1">
    <location>
        <position position="150"/>
    </location>
    <ligand>
        <name>a divalent metal cation</name>
        <dbReference type="ChEBI" id="CHEBI:60240"/>
        <label>1</label>
    </ligand>
</feature>
<feature type="binding site" evidence="1">
    <location>
        <position position="151"/>
    </location>
    <ligand>
        <name>a divalent metal cation</name>
        <dbReference type="ChEBI" id="CHEBI:60240"/>
        <label>2</label>
    </ligand>
</feature>
<feature type="binding site" evidence="2 5">
    <location>
        <begin position="260"/>
        <end position="264"/>
    </location>
    <ligand>
        <name>FMN</name>
        <dbReference type="ChEBI" id="CHEBI:58210"/>
    </ligand>
</feature>
<feature type="binding site" evidence="2 5">
    <location>
        <position position="288"/>
    </location>
    <ligand>
        <name>FMN</name>
        <dbReference type="ChEBI" id="CHEBI:58210"/>
    </ligand>
</feature>
<feature type="binding site" evidence="2 6">
    <location>
        <position position="320"/>
    </location>
    <ligand>
        <name>coenzyme F420-(gamma-Glu)n</name>
        <dbReference type="ChEBI" id="CHEBI:133980"/>
    </ligand>
</feature>
<feature type="binding site" evidence="2 5">
    <location>
        <position position="399"/>
    </location>
    <ligand>
        <name>FMN</name>
        <dbReference type="ChEBI" id="CHEBI:58210"/>
    </ligand>
</feature>
<feature type="binding site" evidence="2 5">
    <location>
        <position position="436"/>
    </location>
    <ligand>
        <name>FMN</name>
        <dbReference type="ChEBI" id="CHEBI:58210"/>
    </ligand>
</feature>
<feature type="helix" evidence="7">
    <location>
        <begin position="245"/>
        <end position="253"/>
    </location>
</feature>
<feature type="helix" evidence="7">
    <location>
        <begin position="254"/>
        <end position="258"/>
    </location>
</feature>
<feature type="helix" evidence="7">
    <location>
        <begin position="273"/>
        <end position="283"/>
    </location>
</feature>
<feature type="strand" evidence="7">
    <location>
        <begin position="295"/>
        <end position="300"/>
    </location>
</feature>
<feature type="helix" evidence="7">
    <location>
        <begin position="303"/>
        <end position="323"/>
    </location>
</feature>
<feature type="helix" evidence="7">
    <location>
        <begin position="328"/>
        <end position="335"/>
    </location>
</feature>
<feature type="helix" evidence="7">
    <location>
        <begin position="336"/>
        <end position="338"/>
    </location>
</feature>
<feature type="helix" evidence="7">
    <location>
        <begin position="339"/>
        <end position="343"/>
    </location>
</feature>
<feature type="strand" evidence="7">
    <location>
        <begin position="345"/>
        <end position="352"/>
    </location>
</feature>
<feature type="helix" evidence="7">
    <location>
        <begin position="363"/>
        <end position="389"/>
    </location>
</feature>
<feature type="turn" evidence="7">
    <location>
        <begin position="390"/>
        <end position="392"/>
    </location>
</feature>
<feature type="strand" evidence="7">
    <location>
        <begin position="394"/>
        <end position="398"/>
    </location>
</feature>
<feature type="helix" evidence="7">
    <location>
        <begin position="400"/>
        <end position="404"/>
    </location>
</feature>
<feature type="helix" evidence="7">
    <location>
        <begin position="405"/>
        <end position="412"/>
    </location>
</feature>
<feature type="strand" evidence="7">
    <location>
        <begin position="423"/>
        <end position="427"/>
    </location>
</feature>
<feature type="strand" evidence="7">
    <location>
        <begin position="429"/>
        <end position="431"/>
    </location>
</feature>
<feature type="helix" evidence="7">
    <location>
        <begin position="442"/>
        <end position="444"/>
    </location>
</feature>
<feature type="strand" evidence="7">
    <location>
        <begin position="445"/>
        <end position="447"/>
    </location>
</feature>